<name>COAD_SHEHH</name>
<protein>
    <recommendedName>
        <fullName evidence="1">Phosphopantetheine adenylyltransferase</fullName>
        <ecNumber evidence="1">2.7.7.3</ecNumber>
    </recommendedName>
    <alternativeName>
        <fullName evidence="1">Dephospho-CoA pyrophosphorylase</fullName>
    </alternativeName>
    <alternativeName>
        <fullName evidence="1">Pantetheine-phosphate adenylyltransferase</fullName>
        <shortName evidence="1">PPAT</shortName>
    </alternativeName>
</protein>
<comment type="function">
    <text evidence="1">Reversibly transfers an adenylyl group from ATP to 4'-phosphopantetheine, yielding dephospho-CoA (dPCoA) and pyrophosphate.</text>
</comment>
<comment type="catalytic activity">
    <reaction evidence="1">
        <text>(R)-4'-phosphopantetheine + ATP + H(+) = 3'-dephospho-CoA + diphosphate</text>
        <dbReference type="Rhea" id="RHEA:19801"/>
        <dbReference type="ChEBI" id="CHEBI:15378"/>
        <dbReference type="ChEBI" id="CHEBI:30616"/>
        <dbReference type="ChEBI" id="CHEBI:33019"/>
        <dbReference type="ChEBI" id="CHEBI:57328"/>
        <dbReference type="ChEBI" id="CHEBI:61723"/>
        <dbReference type="EC" id="2.7.7.3"/>
    </reaction>
</comment>
<comment type="cofactor">
    <cofactor evidence="1">
        <name>Mg(2+)</name>
        <dbReference type="ChEBI" id="CHEBI:18420"/>
    </cofactor>
</comment>
<comment type="pathway">
    <text evidence="1">Cofactor biosynthesis; coenzyme A biosynthesis; CoA from (R)-pantothenate: step 4/5.</text>
</comment>
<comment type="subunit">
    <text evidence="1">Homohexamer.</text>
</comment>
<comment type="subcellular location">
    <subcellularLocation>
        <location evidence="1">Cytoplasm</location>
    </subcellularLocation>
</comment>
<comment type="similarity">
    <text evidence="1">Belongs to the bacterial CoaD family.</text>
</comment>
<feature type="chain" id="PRO_1000076787" description="Phosphopantetheine adenylyltransferase">
    <location>
        <begin position="1"/>
        <end position="159"/>
    </location>
</feature>
<feature type="binding site" evidence="1">
    <location>
        <begin position="10"/>
        <end position="11"/>
    </location>
    <ligand>
        <name>ATP</name>
        <dbReference type="ChEBI" id="CHEBI:30616"/>
    </ligand>
</feature>
<feature type="binding site" evidence="1">
    <location>
        <position position="10"/>
    </location>
    <ligand>
        <name>substrate</name>
    </ligand>
</feature>
<feature type="binding site" evidence="1">
    <location>
        <position position="18"/>
    </location>
    <ligand>
        <name>ATP</name>
        <dbReference type="ChEBI" id="CHEBI:30616"/>
    </ligand>
</feature>
<feature type="binding site" evidence="1">
    <location>
        <position position="42"/>
    </location>
    <ligand>
        <name>substrate</name>
    </ligand>
</feature>
<feature type="binding site" evidence="1">
    <location>
        <position position="74"/>
    </location>
    <ligand>
        <name>substrate</name>
    </ligand>
</feature>
<feature type="binding site" evidence="1">
    <location>
        <position position="88"/>
    </location>
    <ligand>
        <name>substrate</name>
    </ligand>
</feature>
<feature type="binding site" evidence="1">
    <location>
        <begin position="89"/>
        <end position="91"/>
    </location>
    <ligand>
        <name>ATP</name>
        <dbReference type="ChEBI" id="CHEBI:30616"/>
    </ligand>
</feature>
<feature type="binding site" evidence="1">
    <location>
        <position position="99"/>
    </location>
    <ligand>
        <name>ATP</name>
        <dbReference type="ChEBI" id="CHEBI:30616"/>
    </ligand>
</feature>
<feature type="binding site" evidence="1">
    <location>
        <begin position="124"/>
        <end position="130"/>
    </location>
    <ligand>
        <name>ATP</name>
        <dbReference type="ChEBI" id="CHEBI:30616"/>
    </ligand>
</feature>
<feature type="site" description="Transition state stabilizer" evidence="1">
    <location>
        <position position="18"/>
    </location>
</feature>
<organism>
    <name type="scientific">Shewanella halifaxensis (strain HAW-EB4)</name>
    <dbReference type="NCBI Taxonomy" id="458817"/>
    <lineage>
        <taxon>Bacteria</taxon>
        <taxon>Pseudomonadati</taxon>
        <taxon>Pseudomonadota</taxon>
        <taxon>Gammaproteobacteria</taxon>
        <taxon>Alteromonadales</taxon>
        <taxon>Shewanellaceae</taxon>
        <taxon>Shewanella</taxon>
    </lineage>
</organism>
<gene>
    <name evidence="1" type="primary">coaD</name>
    <name type="ordered locus">Shal_0135</name>
</gene>
<sequence>MHKRAIYPGTFDPVTNGHADLIERAANLFEHVIIGIAANPSKQPRFTLAERVELLKTVTAHLDNVEVVGFSGLLVDFAKEQNASVLVRGLRAVSDFEYEFQLANMNRRLSPDLESVFLTPAEENSFISSTLVKEVALHGGDVSQFVHAEVANALTKKAN</sequence>
<accession>B0TMZ9</accession>
<reference key="1">
    <citation type="submission" date="2008-01" db="EMBL/GenBank/DDBJ databases">
        <title>Complete sequence of Shewanella halifaxensis HAW-EB4.</title>
        <authorList>
            <consortium name="US DOE Joint Genome Institute"/>
            <person name="Copeland A."/>
            <person name="Lucas S."/>
            <person name="Lapidus A."/>
            <person name="Glavina del Rio T."/>
            <person name="Dalin E."/>
            <person name="Tice H."/>
            <person name="Bruce D."/>
            <person name="Goodwin L."/>
            <person name="Pitluck S."/>
            <person name="Sims D."/>
            <person name="Brettin T."/>
            <person name="Detter J.C."/>
            <person name="Han C."/>
            <person name="Kuske C.R."/>
            <person name="Schmutz J."/>
            <person name="Larimer F."/>
            <person name="Land M."/>
            <person name="Hauser L."/>
            <person name="Kyrpides N."/>
            <person name="Kim E."/>
            <person name="Zhao J.-S."/>
            <person name="Richardson P."/>
        </authorList>
    </citation>
    <scope>NUCLEOTIDE SEQUENCE [LARGE SCALE GENOMIC DNA]</scope>
    <source>
        <strain>HAW-EB4</strain>
    </source>
</reference>
<dbReference type="EC" id="2.7.7.3" evidence="1"/>
<dbReference type="EMBL" id="CP000931">
    <property type="protein sequence ID" value="ABZ74711.1"/>
    <property type="molecule type" value="Genomic_DNA"/>
</dbReference>
<dbReference type="RefSeq" id="WP_012275268.1">
    <property type="nucleotide sequence ID" value="NC_010334.1"/>
</dbReference>
<dbReference type="SMR" id="B0TMZ9"/>
<dbReference type="STRING" id="458817.Shal_0135"/>
<dbReference type="KEGG" id="shl:Shal_0135"/>
<dbReference type="eggNOG" id="COG0669">
    <property type="taxonomic scope" value="Bacteria"/>
</dbReference>
<dbReference type="HOGENOM" id="CLU_100149_0_1_6"/>
<dbReference type="OrthoDB" id="9806661at2"/>
<dbReference type="UniPathway" id="UPA00241">
    <property type="reaction ID" value="UER00355"/>
</dbReference>
<dbReference type="Proteomes" id="UP000001317">
    <property type="component" value="Chromosome"/>
</dbReference>
<dbReference type="GO" id="GO:0005737">
    <property type="term" value="C:cytoplasm"/>
    <property type="evidence" value="ECO:0007669"/>
    <property type="project" value="UniProtKB-SubCell"/>
</dbReference>
<dbReference type="GO" id="GO:0005524">
    <property type="term" value="F:ATP binding"/>
    <property type="evidence" value="ECO:0007669"/>
    <property type="project" value="UniProtKB-KW"/>
</dbReference>
<dbReference type="GO" id="GO:0004595">
    <property type="term" value="F:pantetheine-phosphate adenylyltransferase activity"/>
    <property type="evidence" value="ECO:0007669"/>
    <property type="project" value="UniProtKB-UniRule"/>
</dbReference>
<dbReference type="GO" id="GO:0015937">
    <property type="term" value="P:coenzyme A biosynthetic process"/>
    <property type="evidence" value="ECO:0007669"/>
    <property type="project" value="UniProtKB-UniRule"/>
</dbReference>
<dbReference type="CDD" id="cd02163">
    <property type="entry name" value="PPAT"/>
    <property type="match status" value="1"/>
</dbReference>
<dbReference type="FunFam" id="3.40.50.620:FF:000012">
    <property type="entry name" value="Phosphopantetheine adenylyltransferase"/>
    <property type="match status" value="1"/>
</dbReference>
<dbReference type="Gene3D" id="3.40.50.620">
    <property type="entry name" value="HUPs"/>
    <property type="match status" value="1"/>
</dbReference>
<dbReference type="HAMAP" id="MF_00151">
    <property type="entry name" value="PPAT_bact"/>
    <property type="match status" value="1"/>
</dbReference>
<dbReference type="InterPro" id="IPR004821">
    <property type="entry name" value="Cyt_trans-like"/>
</dbReference>
<dbReference type="InterPro" id="IPR001980">
    <property type="entry name" value="PPAT"/>
</dbReference>
<dbReference type="InterPro" id="IPR014729">
    <property type="entry name" value="Rossmann-like_a/b/a_fold"/>
</dbReference>
<dbReference type="NCBIfam" id="TIGR01510">
    <property type="entry name" value="coaD_prev_kdtB"/>
    <property type="match status" value="1"/>
</dbReference>
<dbReference type="NCBIfam" id="TIGR00125">
    <property type="entry name" value="cyt_tran_rel"/>
    <property type="match status" value="1"/>
</dbReference>
<dbReference type="PANTHER" id="PTHR21342">
    <property type="entry name" value="PHOSPHOPANTETHEINE ADENYLYLTRANSFERASE"/>
    <property type="match status" value="1"/>
</dbReference>
<dbReference type="PANTHER" id="PTHR21342:SF1">
    <property type="entry name" value="PHOSPHOPANTETHEINE ADENYLYLTRANSFERASE"/>
    <property type="match status" value="1"/>
</dbReference>
<dbReference type="Pfam" id="PF01467">
    <property type="entry name" value="CTP_transf_like"/>
    <property type="match status" value="1"/>
</dbReference>
<dbReference type="PRINTS" id="PR01020">
    <property type="entry name" value="LPSBIOSNTHSS"/>
</dbReference>
<dbReference type="SUPFAM" id="SSF52374">
    <property type="entry name" value="Nucleotidylyl transferase"/>
    <property type="match status" value="1"/>
</dbReference>
<evidence type="ECO:0000255" key="1">
    <source>
        <dbReference type="HAMAP-Rule" id="MF_00151"/>
    </source>
</evidence>
<keyword id="KW-0067">ATP-binding</keyword>
<keyword id="KW-0173">Coenzyme A biosynthesis</keyword>
<keyword id="KW-0963">Cytoplasm</keyword>
<keyword id="KW-0460">Magnesium</keyword>
<keyword id="KW-0547">Nucleotide-binding</keyword>
<keyword id="KW-0548">Nucleotidyltransferase</keyword>
<keyword id="KW-0808">Transferase</keyword>
<proteinExistence type="inferred from homology"/>